<protein>
    <recommendedName>
        <fullName evidence="1">Bifunctional protein FolD</fullName>
    </recommendedName>
    <domain>
        <recommendedName>
            <fullName evidence="1">Methylenetetrahydrofolate dehydrogenase</fullName>
            <ecNumber evidence="1">1.5.1.5</ecNumber>
        </recommendedName>
    </domain>
    <domain>
        <recommendedName>
            <fullName evidence="1">Methenyltetrahydrofolate cyclohydrolase</fullName>
            <ecNumber evidence="1">3.5.4.9</ecNumber>
        </recommendedName>
    </domain>
</protein>
<proteinExistence type="inferred from homology"/>
<reference key="1">
    <citation type="journal article" date="2007" name="PLoS Genet.">
        <title>Genome analysis of Minibacterium massiliensis highlights the convergent evolution of water-living bacteria.</title>
        <authorList>
            <person name="Audic S."/>
            <person name="Robert C."/>
            <person name="Campagna B."/>
            <person name="Parinello H."/>
            <person name="Claverie J.-M."/>
            <person name="Raoult D."/>
            <person name="Drancourt M."/>
        </authorList>
    </citation>
    <scope>NUCLEOTIDE SEQUENCE [LARGE SCALE GENOMIC DNA]</scope>
    <source>
        <strain>Marseille</strain>
    </source>
</reference>
<name>FOLD_JANMA</name>
<evidence type="ECO:0000255" key="1">
    <source>
        <dbReference type="HAMAP-Rule" id="MF_01576"/>
    </source>
</evidence>
<feature type="chain" id="PRO_0000305827" description="Bifunctional protein FolD">
    <location>
        <begin position="1"/>
        <end position="283"/>
    </location>
</feature>
<feature type="binding site" evidence="1">
    <location>
        <begin position="165"/>
        <end position="167"/>
    </location>
    <ligand>
        <name>NADP(+)</name>
        <dbReference type="ChEBI" id="CHEBI:58349"/>
    </ligand>
</feature>
<feature type="binding site" evidence="1">
    <location>
        <position position="190"/>
    </location>
    <ligand>
        <name>NADP(+)</name>
        <dbReference type="ChEBI" id="CHEBI:58349"/>
    </ligand>
</feature>
<feature type="binding site" evidence="1">
    <location>
        <position position="231"/>
    </location>
    <ligand>
        <name>NADP(+)</name>
        <dbReference type="ChEBI" id="CHEBI:58349"/>
    </ligand>
</feature>
<dbReference type="EC" id="1.5.1.5" evidence="1"/>
<dbReference type="EC" id="3.5.4.9" evidence="1"/>
<dbReference type="EMBL" id="CP000269">
    <property type="protein sequence ID" value="ABR88683.1"/>
    <property type="molecule type" value="Genomic_DNA"/>
</dbReference>
<dbReference type="RefSeq" id="WP_012078536.1">
    <property type="nucleotide sequence ID" value="NC_009659.1"/>
</dbReference>
<dbReference type="SMR" id="A6SVR5"/>
<dbReference type="STRING" id="375286.mma_0672"/>
<dbReference type="KEGG" id="mms:mma_0672"/>
<dbReference type="eggNOG" id="COG0190">
    <property type="taxonomic scope" value="Bacteria"/>
</dbReference>
<dbReference type="HOGENOM" id="CLU_034045_2_1_4"/>
<dbReference type="OrthoDB" id="9803580at2"/>
<dbReference type="UniPathway" id="UPA00193"/>
<dbReference type="Proteomes" id="UP000006388">
    <property type="component" value="Chromosome"/>
</dbReference>
<dbReference type="GO" id="GO:0005829">
    <property type="term" value="C:cytosol"/>
    <property type="evidence" value="ECO:0007669"/>
    <property type="project" value="TreeGrafter"/>
</dbReference>
<dbReference type="GO" id="GO:0004477">
    <property type="term" value="F:methenyltetrahydrofolate cyclohydrolase activity"/>
    <property type="evidence" value="ECO:0007669"/>
    <property type="project" value="UniProtKB-UniRule"/>
</dbReference>
<dbReference type="GO" id="GO:0004488">
    <property type="term" value="F:methylenetetrahydrofolate dehydrogenase (NADP+) activity"/>
    <property type="evidence" value="ECO:0007669"/>
    <property type="project" value="UniProtKB-UniRule"/>
</dbReference>
<dbReference type="GO" id="GO:0000105">
    <property type="term" value="P:L-histidine biosynthetic process"/>
    <property type="evidence" value="ECO:0007669"/>
    <property type="project" value="UniProtKB-KW"/>
</dbReference>
<dbReference type="GO" id="GO:0009086">
    <property type="term" value="P:methionine biosynthetic process"/>
    <property type="evidence" value="ECO:0007669"/>
    <property type="project" value="UniProtKB-KW"/>
</dbReference>
<dbReference type="GO" id="GO:0006164">
    <property type="term" value="P:purine nucleotide biosynthetic process"/>
    <property type="evidence" value="ECO:0007669"/>
    <property type="project" value="UniProtKB-KW"/>
</dbReference>
<dbReference type="GO" id="GO:0035999">
    <property type="term" value="P:tetrahydrofolate interconversion"/>
    <property type="evidence" value="ECO:0007669"/>
    <property type="project" value="UniProtKB-UniRule"/>
</dbReference>
<dbReference type="CDD" id="cd01080">
    <property type="entry name" value="NAD_bind_m-THF_DH_Cyclohyd"/>
    <property type="match status" value="1"/>
</dbReference>
<dbReference type="FunFam" id="3.40.50.720:FF:000094">
    <property type="entry name" value="Bifunctional protein FolD"/>
    <property type="match status" value="1"/>
</dbReference>
<dbReference type="FunFam" id="3.40.50.10860:FF:000005">
    <property type="entry name" value="C-1-tetrahydrofolate synthase, cytoplasmic, putative"/>
    <property type="match status" value="1"/>
</dbReference>
<dbReference type="Gene3D" id="3.40.50.10860">
    <property type="entry name" value="Leucine Dehydrogenase, chain A, domain 1"/>
    <property type="match status" value="1"/>
</dbReference>
<dbReference type="Gene3D" id="3.40.50.720">
    <property type="entry name" value="NAD(P)-binding Rossmann-like Domain"/>
    <property type="match status" value="1"/>
</dbReference>
<dbReference type="HAMAP" id="MF_01576">
    <property type="entry name" value="THF_DHG_CYH"/>
    <property type="match status" value="1"/>
</dbReference>
<dbReference type="InterPro" id="IPR046346">
    <property type="entry name" value="Aminoacid_DH-like_N_sf"/>
</dbReference>
<dbReference type="InterPro" id="IPR036291">
    <property type="entry name" value="NAD(P)-bd_dom_sf"/>
</dbReference>
<dbReference type="InterPro" id="IPR000672">
    <property type="entry name" value="THF_DH/CycHdrlase"/>
</dbReference>
<dbReference type="InterPro" id="IPR020630">
    <property type="entry name" value="THF_DH/CycHdrlase_cat_dom"/>
</dbReference>
<dbReference type="InterPro" id="IPR020867">
    <property type="entry name" value="THF_DH/CycHdrlase_CS"/>
</dbReference>
<dbReference type="InterPro" id="IPR020631">
    <property type="entry name" value="THF_DH/CycHdrlase_NAD-bd_dom"/>
</dbReference>
<dbReference type="NCBIfam" id="NF008058">
    <property type="entry name" value="PRK10792.1"/>
    <property type="match status" value="1"/>
</dbReference>
<dbReference type="NCBIfam" id="NF010783">
    <property type="entry name" value="PRK14186.1"/>
    <property type="match status" value="1"/>
</dbReference>
<dbReference type="NCBIfam" id="NF010786">
    <property type="entry name" value="PRK14189.1"/>
    <property type="match status" value="1"/>
</dbReference>
<dbReference type="PANTHER" id="PTHR48099:SF5">
    <property type="entry name" value="C-1-TETRAHYDROFOLATE SYNTHASE, CYTOPLASMIC"/>
    <property type="match status" value="1"/>
</dbReference>
<dbReference type="PANTHER" id="PTHR48099">
    <property type="entry name" value="C-1-TETRAHYDROFOLATE SYNTHASE, CYTOPLASMIC-RELATED"/>
    <property type="match status" value="1"/>
</dbReference>
<dbReference type="Pfam" id="PF00763">
    <property type="entry name" value="THF_DHG_CYH"/>
    <property type="match status" value="1"/>
</dbReference>
<dbReference type="Pfam" id="PF02882">
    <property type="entry name" value="THF_DHG_CYH_C"/>
    <property type="match status" value="1"/>
</dbReference>
<dbReference type="PRINTS" id="PR00085">
    <property type="entry name" value="THFDHDRGNASE"/>
</dbReference>
<dbReference type="SUPFAM" id="SSF53223">
    <property type="entry name" value="Aminoacid dehydrogenase-like, N-terminal domain"/>
    <property type="match status" value="1"/>
</dbReference>
<dbReference type="SUPFAM" id="SSF51735">
    <property type="entry name" value="NAD(P)-binding Rossmann-fold domains"/>
    <property type="match status" value="1"/>
</dbReference>
<dbReference type="PROSITE" id="PS00767">
    <property type="entry name" value="THF_DHG_CYH_2"/>
    <property type="match status" value="1"/>
</dbReference>
<sequence>MTAQIIDGNLLSQQLRKDVAVRAAALTAKGKQPGLAVILVGADPASQVYVRNKVKACEDNGLYSLLEKYDADMTEAALLARIAALNADPKIHGILVQMPLPKHIDSNKVIEAISPRKDVDGYSVLSAGELLTGLPGFRPCTPYGCMKLIESTGTKLAGKHAVVIGRSNTVGKPMALLLLQANATVTICHSGTADLAYHTRQADVVVAATGRRNTLTAEMIKPGAIVIDVGINRDDNGKLCGDVDFANAKEVASYITPVPGGVGPMTITMLLVNTIEAAERETN</sequence>
<gene>
    <name evidence="1" type="primary">folD</name>
    <name type="ordered locus">mma_0672</name>
</gene>
<comment type="function">
    <text evidence="1">Catalyzes the oxidation of 5,10-methylenetetrahydrofolate to 5,10-methenyltetrahydrofolate and then the hydrolysis of 5,10-methenyltetrahydrofolate to 10-formyltetrahydrofolate.</text>
</comment>
<comment type="catalytic activity">
    <reaction evidence="1">
        <text>(6R)-5,10-methylene-5,6,7,8-tetrahydrofolate + NADP(+) = (6R)-5,10-methenyltetrahydrofolate + NADPH</text>
        <dbReference type="Rhea" id="RHEA:22812"/>
        <dbReference type="ChEBI" id="CHEBI:15636"/>
        <dbReference type="ChEBI" id="CHEBI:57455"/>
        <dbReference type="ChEBI" id="CHEBI:57783"/>
        <dbReference type="ChEBI" id="CHEBI:58349"/>
        <dbReference type="EC" id="1.5.1.5"/>
    </reaction>
</comment>
<comment type="catalytic activity">
    <reaction evidence="1">
        <text>(6R)-5,10-methenyltetrahydrofolate + H2O = (6R)-10-formyltetrahydrofolate + H(+)</text>
        <dbReference type="Rhea" id="RHEA:23700"/>
        <dbReference type="ChEBI" id="CHEBI:15377"/>
        <dbReference type="ChEBI" id="CHEBI:15378"/>
        <dbReference type="ChEBI" id="CHEBI:57455"/>
        <dbReference type="ChEBI" id="CHEBI:195366"/>
        <dbReference type="EC" id="3.5.4.9"/>
    </reaction>
</comment>
<comment type="pathway">
    <text evidence="1">One-carbon metabolism; tetrahydrofolate interconversion.</text>
</comment>
<comment type="subunit">
    <text evidence="1">Homodimer.</text>
</comment>
<comment type="similarity">
    <text evidence="1">Belongs to the tetrahydrofolate dehydrogenase/cyclohydrolase family.</text>
</comment>
<accession>A6SVR5</accession>
<organism>
    <name type="scientific">Janthinobacterium sp. (strain Marseille)</name>
    <name type="common">Minibacterium massiliensis</name>
    <dbReference type="NCBI Taxonomy" id="375286"/>
    <lineage>
        <taxon>Bacteria</taxon>
        <taxon>Pseudomonadati</taxon>
        <taxon>Pseudomonadota</taxon>
        <taxon>Betaproteobacteria</taxon>
        <taxon>Burkholderiales</taxon>
        <taxon>Oxalobacteraceae</taxon>
        <taxon>Janthinobacterium</taxon>
    </lineage>
</organism>
<keyword id="KW-0028">Amino-acid biosynthesis</keyword>
<keyword id="KW-0368">Histidine biosynthesis</keyword>
<keyword id="KW-0378">Hydrolase</keyword>
<keyword id="KW-0486">Methionine biosynthesis</keyword>
<keyword id="KW-0511">Multifunctional enzyme</keyword>
<keyword id="KW-0521">NADP</keyword>
<keyword id="KW-0554">One-carbon metabolism</keyword>
<keyword id="KW-0560">Oxidoreductase</keyword>
<keyword id="KW-0658">Purine biosynthesis</keyword>